<sequence>MPDNNTEQLQGSPSSDQRLRVDWDNGNHFDVSPDRYAPHLSEFYPIVNSKRPVASSAGSENNDHLDDMNHLRSSKVYSKARRASSITSGTSTINDLQTLITKRDVKETQEALSTLLRNSNAYSDSLLKTSQNGAEIAHSLENIAKLKGCNDETAEKLLSASGLFYLLSNHQLIMSKYFNDLLGDNLIDDIDEFELQTKIMENKFKAQSKEQSLKLKLQERHNFDISKRKIRNLISYRESLSSLQARLDQLETLKHDFYMDSYELVENTCNKVLSKVATVSRAQVEISENIARKGWSGGGLDELLCDADDPFSKKADGPYGTIGGDGETAGEAYNSDEETGGNDVVLNELLEGTSQPSTSKTSLPKSKGSSTVSTPNHSQSSSNKDGVRNNGGGKNGEDEDTDNLMGTENSFSLPPTRNSAEETTQTFKQLSIKEDNDNHSSDTDGMQDQSSNI</sequence>
<keyword id="KW-0175">Coiled coil</keyword>
<keyword id="KW-0472">Membrane</keyword>
<keyword id="KW-0597">Phosphoprotein</keyword>
<keyword id="KW-1185">Reference proteome</keyword>
<keyword id="KW-0926">Vacuole</keyword>
<proteinExistence type="evidence at protein level"/>
<evidence type="ECO:0000255" key="1"/>
<evidence type="ECO:0000256" key="2">
    <source>
        <dbReference type="SAM" id="MobiDB-lite"/>
    </source>
</evidence>
<evidence type="ECO:0000269" key="3">
    <source>
    </source>
</evidence>
<evidence type="ECO:0000269" key="4">
    <source>
    </source>
</evidence>
<evidence type="ECO:0007744" key="5">
    <source>
    </source>
</evidence>
<evidence type="ECO:0007744" key="6">
    <source>
    </source>
</evidence>
<evidence type="ECO:0007744" key="7">
    <source>
    </source>
</evidence>
<organism>
    <name type="scientific">Saccharomyces cerevisiae (strain ATCC 204508 / S288c)</name>
    <name type="common">Baker's yeast</name>
    <dbReference type="NCBI Taxonomy" id="559292"/>
    <lineage>
        <taxon>Eukaryota</taxon>
        <taxon>Fungi</taxon>
        <taxon>Dikarya</taxon>
        <taxon>Ascomycota</taxon>
        <taxon>Saccharomycotina</taxon>
        <taxon>Saccharomycetes</taxon>
        <taxon>Saccharomycetales</taxon>
        <taxon>Saccharomycetaceae</taxon>
        <taxon>Saccharomyces</taxon>
    </lineage>
</organism>
<name>IVY1_YEAST</name>
<reference key="1">
    <citation type="journal article" date="1997" name="Nature">
        <title>The nucleotide sequence of Saccharomyces cerevisiae chromosome IV.</title>
        <authorList>
            <person name="Jacq C."/>
            <person name="Alt-Moerbe J."/>
            <person name="Andre B."/>
            <person name="Arnold W."/>
            <person name="Bahr A."/>
            <person name="Ballesta J.P.G."/>
            <person name="Bargues M."/>
            <person name="Baron L."/>
            <person name="Becker A."/>
            <person name="Biteau N."/>
            <person name="Bloecker H."/>
            <person name="Blugeon C."/>
            <person name="Boskovic J."/>
            <person name="Brandt P."/>
            <person name="Brueckner M."/>
            <person name="Buitrago M.J."/>
            <person name="Coster F."/>
            <person name="Delaveau T."/>
            <person name="del Rey F."/>
            <person name="Dujon B."/>
            <person name="Eide L.G."/>
            <person name="Garcia-Cantalejo J.M."/>
            <person name="Goffeau A."/>
            <person name="Gomez-Peris A."/>
            <person name="Granotier C."/>
            <person name="Hanemann V."/>
            <person name="Hankeln T."/>
            <person name="Hoheisel J.D."/>
            <person name="Jaeger W."/>
            <person name="Jimenez A."/>
            <person name="Jonniaux J.-L."/>
            <person name="Kraemer C."/>
            <person name="Kuester H."/>
            <person name="Laamanen P."/>
            <person name="Legros Y."/>
            <person name="Louis E.J."/>
            <person name="Moeller-Rieker S."/>
            <person name="Monnet A."/>
            <person name="Moro M."/>
            <person name="Mueller-Auer S."/>
            <person name="Nussbaumer B."/>
            <person name="Paricio N."/>
            <person name="Paulin L."/>
            <person name="Perea J."/>
            <person name="Perez-Alonso M."/>
            <person name="Perez-Ortin J.E."/>
            <person name="Pohl T.M."/>
            <person name="Prydz H."/>
            <person name="Purnelle B."/>
            <person name="Rasmussen S.W."/>
            <person name="Remacha M.A."/>
            <person name="Revuelta J.L."/>
            <person name="Rieger M."/>
            <person name="Salom D."/>
            <person name="Saluz H.P."/>
            <person name="Saiz J.E."/>
            <person name="Saren A.-M."/>
            <person name="Schaefer M."/>
            <person name="Scharfe M."/>
            <person name="Schmidt E.R."/>
            <person name="Schneider C."/>
            <person name="Scholler P."/>
            <person name="Schwarz S."/>
            <person name="Soler-Mira A."/>
            <person name="Urrestarazu L.A."/>
            <person name="Verhasselt P."/>
            <person name="Vissers S."/>
            <person name="Voet M."/>
            <person name="Volckaert G."/>
            <person name="Wagner G."/>
            <person name="Wambutt R."/>
            <person name="Wedler E."/>
            <person name="Wedler H."/>
            <person name="Woelfl S."/>
            <person name="Harris D.E."/>
            <person name="Bowman S."/>
            <person name="Brown D."/>
            <person name="Churcher C.M."/>
            <person name="Connor R."/>
            <person name="Dedman K."/>
            <person name="Gentles S."/>
            <person name="Hamlin N."/>
            <person name="Hunt S."/>
            <person name="Jones L."/>
            <person name="McDonald S."/>
            <person name="Murphy L.D."/>
            <person name="Niblett D."/>
            <person name="Odell C."/>
            <person name="Oliver K."/>
            <person name="Rajandream M.A."/>
            <person name="Richards C."/>
            <person name="Shore L."/>
            <person name="Walsh S.V."/>
            <person name="Barrell B.G."/>
            <person name="Dietrich F.S."/>
            <person name="Mulligan J.T."/>
            <person name="Allen E."/>
            <person name="Araujo R."/>
            <person name="Aviles E."/>
            <person name="Berno A."/>
            <person name="Carpenter J."/>
            <person name="Chen E."/>
            <person name="Cherry J.M."/>
            <person name="Chung E."/>
            <person name="Duncan M."/>
            <person name="Hunicke-Smith S."/>
            <person name="Hyman R.W."/>
            <person name="Komp C."/>
            <person name="Lashkari D."/>
            <person name="Lew H."/>
            <person name="Lin D."/>
            <person name="Mosedale D."/>
            <person name="Nakahara K."/>
            <person name="Namath A."/>
            <person name="Oefner P."/>
            <person name="Oh C."/>
            <person name="Petel F.X."/>
            <person name="Roberts D."/>
            <person name="Schramm S."/>
            <person name="Schroeder M."/>
            <person name="Shogren T."/>
            <person name="Shroff N."/>
            <person name="Winant A."/>
            <person name="Yelton M.A."/>
            <person name="Botstein D."/>
            <person name="Davis R.W."/>
            <person name="Johnston M."/>
            <person name="Andrews S."/>
            <person name="Brinkman R."/>
            <person name="Cooper J."/>
            <person name="Ding H."/>
            <person name="Du Z."/>
            <person name="Favello A."/>
            <person name="Fulton L."/>
            <person name="Gattung S."/>
            <person name="Greco T."/>
            <person name="Hallsworth K."/>
            <person name="Hawkins J."/>
            <person name="Hillier L.W."/>
            <person name="Jier M."/>
            <person name="Johnson D."/>
            <person name="Johnston L."/>
            <person name="Kirsten J."/>
            <person name="Kucaba T."/>
            <person name="Langston Y."/>
            <person name="Latreille P."/>
            <person name="Le T."/>
            <person name="Mardis E."/>
            <person name="Menezes S."/>
            <person name="Miller N."/>
            <person name="Nhan M."/>
            <person name="Pauley A."/>
            <person name="Peluso D."/>
            <person name="Rifkin L."/>
            <person name="Riles L."/>
            <person name="Taich A."/>
            <person name="Trevaskis E."/>
            <person name="Vignati D."/>
            <person name="Wilcox L."/>
            <person name="Wohldman P."/>
            <person name="Vaudin M."/>
            <person name="Wilson R."/>
            <person name="Waterston R."/>
            <person name="Albermann K."/>
            <person name="Hani J."/>
            <person name="Heumann K."/>
            <person name="Kleine K."/>
            <person name="Mewes H.-W."/>
            <person name="Zollner A."/>
            <person name="Zaccaria P."/>
        </authorList>
    </citation>
    <scope>NUCLEOTIDE SEQUENCE [LARGE SCALE GENOMIC DNA]</scope>
    <source>
        <strain>ATCC 204508 / S288c</strain>
    </source>
</reference>
<reference key="2">
    <citation type="journal article" date="2014" name="G3 (Bethesda)">
        <title>The reference genome sequence of Saccharomyces cerevisiae: Then and now.</title>
        <authorList>
            <person name="Engel S.R."/>
            <person name="Dietrich F.S."/>
            <person name="Fisk D.G."/>
            <person name="Binkley G."/>
            <person name="Balakrishnan R."/>
            <person name="Costanzo M.C."/>
            <person name="Dwight S.S."/>
            <person name="Hitz B.C."/>
            <person name="Karra K."/>
            <person name="Nash R.S."/>
            <person name="Weng S."/>
            <person name="Wong E.D."/>
            <person name="Lloyd P."/>
            <person name="Skrzypek M.S."/>
            <person name="Miyasato S.R."/>
            <person name="Simison M."/>
            <person name="Cherry J.M."/>
        </authorList>
    </citation>
    <scope>GENOME REANNOTATION</scope>
    <source>
        <strain>ATCC 204508 / S288c</strain>
    </source>
</reference>
<reference key="3">
    <citation type="journal article" date="2002" name="Eur. J. Cell Biol.">
        <title>A novel phospholipid-binding protein from the yeast Saccharomyces cerevisiae with dual binding specificities for the transport GTPase Ypt7p and the Sec1-related Vps33p.</title>
        <authorList>
            <person name="Lazar T."/>
            <person name="Scheglmann D."/>
            <person name="Gallwitz D."/>
        </authorList>
    </citation>
    <scope>FUNCTION</scope>
    <scope>SUBCELLULAR LOCATION</scope>
    <scope>INTERACTION WITH VPS33 AND YPT7</scope>
</reference>
<reference key="4">
    <citation type="journal article" date="2003" name="Nature">
        <title>Global analysis of protein expression in yeast.</title>
        <authorList>
            <person name="Ghaemmaghami S."/>
            <person name="Huh W.-K."/>
            <person name="Bower K."/>
            <person name="Howson R.W."/>
            <person name="Belle A."/>
            <person name="Dephoure N."/>
            <person name="O'Shea E.K."/>
            <person name="Weissman J.S."/>
        </authorList>
    </citation>
    <scope>LEVEL OF PROTEIN EXPRESSION [LARGE SCALE ANALYSIS]</scope>
</reference>
<reference key="5">
    <citation type="journal article" date="2007" name="J. Proteome Res.">
        <title>Large-scale phosphorylation analysis of alpha-factor-arrested Saccharomyces cerevisiae.</title>
        <authorList>
            <person name="Li X."/>
            <person name="Gerber S.A."/>
            <person name="Rudner A.D."/>
            <person name="Beausoleil S.A."/>
            <person name="Haas W."/>
            <person name="Villen J."/>
            <person name="Elias J.E."/>
            <person name="Gygi S.P."/>
        </authorList>
    </citation>
    <scope>PHOSPHORYLATION [LARGE SCALE ANALYSIS] AT SER-59</scope>
    <scope>IDENTIFICATION BY MASS SPECTROMETRY [LARGE SCALE ANALYSIS]</scope>
    <source>
        <strain>ADR376</strain>
    </source>
</reference>
<reference key="6">
    <citation type="journal article" date="2008" name="Mol. Cell. Proteomics">
        <title>A multidimensional chromatography technology for in-depth phosphoproteome analysis.</title>
        <authorList>
            <person name="Albuquerque C.P."/>
            <person name="Smolka M.B."/>
            <person name="Payne S.H."/>
            <person name="Bafna V."/>
            <person name="Eng J."/>
            <person name="Zhou H."/>
        </authorList>
    </citation>
    <scope>PHOSPHORYLATION [LARGE SCALE ANALYSIS] AT SER-335</scope>
    <scope>IDENTIFICATION BY MASS SPECTROMETRY [LARGE SCALE ANALYSIS]</scope>
</reference>
<reference key="7">
    <citation type="journal article" date="2009" name="Science">
        <title>Global analysis of Cdk1 substrate phosphorylation sites provides insights into evolution.</title>
        <authorList>
            <person name="Holt L.J."/>
            <person name="Tuch B.B."/>
            <person name="Villen J."/>
            <person name="Johnson A.D."/>
            <person name="Gygi S.P."/>
            <person name="Morgan D.O."/>
        </authorList>
    </citation>
    <scope>PHOSPHORYLATION [LARGE SCALE ANALYSIS] AT SER-84 AND SER-85</scope>
    <scope>IDENTIFICATION BY MASS SPECTROMETRY [LARGE SCALE ANALYSIS]</scope>
</reference>
<reference key="8">
    <citation type="journal article" date="2012" name="Proc. Natl. Acad. Sci. U.S.A.">
        <title>N-terminal acetylome analyses and functional insights of the N-terminal acetyltransferase NatB.</title>
        <authorList>
            <person name="Van Damme P."/>
            <person name="Lasa M."/>
            <person name="Polevoda B."/>
            <person name="Gazquez C."/>
            <person name="Elosegui-Artola A."/>
            <person name="Kim D.S."/>
            <person name="De Juan-Pardo E."/>
            <person name="Demeyer K."/>
            <person name="Hole K."/>
            <person name="Larrea E."/>
            <person name="Timmerman E."/>
            <person name="Prieto J."/>
            <person name="Arnesen T."/>
            <person name="Sherman F."/>
            <person name="Gevaert K."/>
            <person name="Aldabe R."/>
        </authorList>
    </citation>
    <scope>IDENTIFICATION BY MASS SPECTROMETRY [LARGE SCALE ANALYSIS]</scope>
</reference>
<comment type="function">
    <text evidence="3">May be required for vacuolar fusion. Overexpression leads to fragmentation of vacuoles, missorting of the vacuolar enzyme carboxypeptidase Y (CPY) to the exterior of the cell and accumulation of multivesicular bodies inside the cell.</text>
</comment>
<comment type="subunit">
    <text evidence="3">Homomultimer. Interacts with YPT7 and VPS33.</text>
</comment>
<comment type="interaction">
    <interactant intactId="EBI-35255">
        <id>Q04934</id>
    </interactant>
    <interactant intactId="EBI-35255">
        <id>Q04934</id>
        <label>IVY1</label>
    </interactant>
    <organismsDiffer>false</organismsDiffer>
    <experiments>2</experiments>
</comment>
<comment type="interaction">
    <interactant intactId="EBI-35255">
        <id>Q04934</id>
    </interactant>
    <interactant intactId="EBI-20395">
        <id>P20795</id>
        <label>VPS33</label>
    </interactant>
    <organismsDiffer>false</organismsDiffer>
    <experiments>3</experiments>
</comment>
<comment type="interaction">
    <interactant intactId="EBI-35255">
        <id>Q04934</id>
    </interactant>
    <interactant intactId="EBI-29509">
        <id>P32939</id>
        <label>YPT7</label>
    </interactant>
    <organismsDiffer>false</organismsDiffer>
    <experiments>3</experiments>
</comment>
<comment type="subcellular location">
    <subcellularLocation>
        <location evidence="3">Vacuole membrane</location>
        <topology evidence="3">Peripheral membrane protein</topology>
    </subcellularLocation>
    <text>Binds to various phospholipids.</text>
</comment>
<comment type="miscellaneous">
    <text evidence="4">Present with 2840 molecules/cell in log phase SD medium.</text>
</comment>
<gene>
    <name type="primary">IVY1</name>
    <name type="ordered locus">YDR229W</name>
    <name type="ORF">YD9934.14</name>
</gene>
<accession>Q04934</accession>
<accession>D6VSL1</accession>
<feature type="chain" id="PRO_0000084277" description="Protein IVY1">
    <location>
        <begin position="1"/>
        <end position="453"/>
    </location>
</feature>
<feature type="region of interest" description="Disordered" evidence="2">
    <location>
        <begin position="1"/>
        <end position="20"/>
    </location>
</feature>
<feature type="region of interest" description="Disordered" evidence="2">
    <location>
        <begin position="316"/>
        <end position="340"/>
    </location>
</feature>
<feature type="region of interest" description="Disordered" evidence="2">
    <location>
        <begin position="353"/>
        <end position="453"/>
    </location>
</feature>
<feature type="coiled-coil region" evidence="1">
    <location>
        <begin position="102"/>
        <end position="122"/>
    </location>
</feature>
<feature type="coiled-coil region" evidence="1">
    <location>
        <begin position="230"/>
        <end position="257"/>
    </location>
</feature>
<feature type="compositionally biased region" description="Polar residues" evidence="2">
    <location>
        <begin position="1"/>
        <end position="16"/>
    </location>
</feature>
<feature type="compositionally biased region" description="Low complexity" evidence="2">
    <location>
        <begin position="353"/>
        <end position="371"/>
    </location>
</feature>
<feature type="compositionally biased region" description="Polar residues" evidence="2">
    <location>
        <begin position="372"/>
        <end position="384"/>
    </location>
</feature>
<feature type="compositionally biased region" description="Polar residues" evidence="2">
    <location>
        <begin position="404"/>
        <end position="429"/>
    </location>
</feature>
<feature type="compositionally biased region" description="Basic and acidic residues" evidence="2">
    <location>
        <begin position="431"/>
        <end position="442"/>
    </location>
</feature>
<feature type="compositionally biased region" description="Polar residues" evidence="2">
    <location>
        <begin position="443"/>
        <end position="453"/>
    </location>
</feature>
<feature type="modified residue" description="Phosphoserine" evidence="5">
    <location>
        <position position="59"/>
    </location>
</feature>
<feature type="modified residue" description="Phosphoserine" evidence="7">
    <location>
        <position position="84"/>
    </location>
</feature>
<feature type="modified residue" description="Phosphoserine" evidence="7">
    <location>
        <position position="85"/>
    </location>
</feature>
<feature type="modified residue" description="Phosphoserine" evidence="6">
    <location>
        <position position="335"/>
    </location>
</feature>
<dbReference type="EMBL" id="Z48612">
    <property type="protein sequence ID" value="CAA88509.1"/>
    <property type="molecule type" value="Genomic_DNA"/>
</dbReference>
<dbReference type="EMBL" id="BK006938">
    <property type="protein sequence ID" value="DAA12071.1"/>
    <property type="molecule type" value="Genomic_DNA"/>
</dbReference>
<dbReference type="PIR" id="S59436">
    <property type="entry name" value="S59436"/>
</dbReference>
<dbReference type="RefSeq" id="NP_010515.3">
    <property type="nucleotide sequence ID" value="NM_001180537.3"/>
</dbReference>
<dbReference type="SMR" id="Q04934"/>
<dbReference type="BioGRID" id="32281">
    <property type="interactions" value="123"/>
</dbReference>
<dbReference type="DIP" id="DIP-2957N"/>
<dbReference type="FunCoup" id="Q04934">
    <property type="interactions" value="67"/>
</dbReference>
<dbReference type="IntAct" id="Q04934">
    <property type="interactions" value="14"/>
</dbReference>
<dbReference type="MINT" id="Q04934"/>
<dbReference type="STRING" id="4932.YDR229W"/>
<dbReference type="iPTMnet" id="Q04934"/>
<dbReference type="PaxDb" id="4932-YDR229W"/>
<dbReference type="PeptideAtlas" id="Q04934"/>
<dbReference type="EnsemblFungi" id="YDR229W_mRNA">
    <property type="protein sequence ID" value="YDR229W"/>
    <property type="gene ID" value="YDR229W"/>
</dbReference>
<dbReference type="GeneID" id="851815"/>
<dbReference type="KEGG" id="sce:YDR229W"/>
<dbReference type="AGR" id="SGD:S000002637"/>
<dbReference type="SGD" id="S000002637">
    <property type="gene designation" value="IVY1"/>
</dbReference>
<dbReference type="VEuPathDB" id="FungiDB:YDR229W"/>
<dbReference type="eggNOG" id="ENOG502QTA6">
    <property type="taxonomic scope" value="Eukaryota"/>
</dbReference>
<dbReference type="HOGENOM" id="CLU_034174_1_0_1"/>
<dbReference type="InParanoid" id="Q04934"/>
<dbReference type="OMA" id="ALENMAH"/>
<dbReference type="OrthoDB" id="5594612at2759"/>
<dbReference type="BioCyc" id="YEAST:G3O-29808-MONOMER"/>
<dbReference type="BioGRID-ORCS" id="851815">
    <property type="hits" value="0 hits in 10 CRISPR screens"/>
</dbReference>
<dbReference type="PRO" id="PR:Q04934"/>
<dbReference type="Proteomes" id="UP000002311">
    <property type="component" value="Chromosome IV"/>
</dbReference>
<dbReference type="RNAct" id="Q04934">
    <property type="molecule type" value="protein"/>
</dbReference>
<dbReference type="GO" id="GO:0000329">
    <property type="term" value="C:fungal-type vacuole membrane"/>
    <property type="evidence" value="ECO:0000314"/>
    <property type="project" value="SGD"/>
</dbReference>
<dbReference type="GO" id="GO:0045121">
    <property type="term" value="C:membrane raft"/>
    <property type="evidence" value="ECO:0000314"/>
    <property type="project" value="SGD"/>
</dbReference>
<dbReference type="GO" id="GO:0042802">
    <property type="term" value="F:identical protein binding"/>
    <property type="evidence" value="ECO:0000353"/>
    <property type="project" value="IntAct"/>
</dbReference>
<dbReference type="GO" id="GO:0005543">
    <property type="term" value="F:phospholipid binding"/>
    <property type="evidence" value="ECO:0000314"/>
    <property type="project" value="SGD"/>
</dbReference>
<dbReference type="GO" id="GO:0042144">
    <property type="term" value="P:vacuole fusion, non-autophagic"/>
    <property type="evidence" value="ECO:0000315"/>
    <property type="project" value="SGD"/>
</dbReference>
<dbReference type="FunFam" id="1.20.1270.60:FF:000088">
    <property type="entry name" value="Ivy1p"/>
    <property type="match status" value="1"/>
</dbReference>
<dbReference type="Gene3D" id="1.20.1270.60">
    <property type="entry name" value="Arfaptin homology (AH) domain/BAR domain"/>
    <property type="match status" value="1"/>
</dbReference>
<dbReference type="InterPro" id="IPR027267">
    <property type="entry name" value="AH/BAR_dom_sf"/>
</dbReference>
<dbReference type="InterPro" id="IPR037470">
    <property type="entry name" value="IVY1"/>
</dbReference>
<dbReference type="PANTHER" id="PTHR38407">
    <property type="entry name" value="PROTEIN IVY1"/>
    <property type="match status" value="1"/>
</dbReference>
<dbReference type="PANTHER" id="PTHR38407:SF1">
    <property type="entry name" value="PROTEIN IVY1"/>
    <property type="match status" value="1"/>
</dbReference>
<protein>
    <recommendedName>
        <fullName>Protein IVY1</fullName>
    </recommendedName>
    <alternativeName>
        <fullName>Interaction with VPS33 and YPT7 protein 1</fullName>
    </alternativeName>
</protein>